<dbReference type="EC" id="3.4.16.-"/>
<dbReference type="EMBL" id="M79452">
    <property type="protein sequence ID" value="AAA17682.1"/>
    <property type="status" value="ALT_FRAME"/>
    <property type="molecule type" value="mRNA"/>
</dbReference>
<dbReference type="EMBL" id="L46594">
    <property type="protein sequence ID" value="AAC41580.1"/>
    <property type="molecule type" value="Genomic_DNA"/>
</dbReference>
<dbReference type="EMBL" id="CH477395">
    <property type="protein sequence ID" value="EAT41863.1"/>
    <property type="molecule type" value="Genomic_DNA"/>
</dbReference>
<dbReference type="PIR" id="A41612">
    <property type="entry name" value="A41612"/>
</dbReference>
<dbReference type="RefSeq" id="XP_001652056.1">
    <property type="nucleotide sequence ID" value="XM_001652006.1"/>
</dbReference>
<dbReference type="SMR" id="P42660"/>
<dbReference type="STRING" id="7159.P42660"/>
<dbReference type="ESTHER" id="aedae-vcp">
    <property type="family name" value="Carboxypeptidase_S10"/>
</dbReference>
<dbReference type="MEROPS" id="S10.003"/>
<dbReference type="GlyCosmos" id="P42660">
    <property type="glycosylation" value="1 site, No reported glycans"/>
</dbReference>
<dbReference type="PaxDb" id="7159-AAEL006563-PA"/>
<dbReference type="GeneID" id="5568117"/>
<dbReference type="KEGG" id="aag:5568117"/>
<dbReference type="VEuPathDB" id="VectorBase:AAEL006563"/>
<dbReference type="eggNOG" id="KOG1282">
    <property type="taxonomic scope" value="Eukaryota"/>
</dbReference>
<dbReference type="HOGENOM" id="CLU_008523_10_1_1"/>
<dbReference type="InParanoid" id="P42660"/>
<dbReference type="OMA" id="TSCDDTV"/>
<dbReference type="OrthoDB" id="443318at2759"/>
<dbReference type="PhylomeDB" id="P42660"/>
<dbReference type="Proteomes" id="UP000008820">
    <property type="component" value="Unassembled WGS sequence"/>
</dbReference>
<dbReference type="Proteomes" id="UP000682892">
    <property type="component" value="Unassembled WGS sequence"/>
</dbReference>
<dbReference type="GO" id="GO:0005576">
    <property type="term" value="C:extracellular region"/>
    <property type="evidence" value="ECO:0007669"/>
    <property type="project" value="UniProtKB-SubCell"/>
</dbReference>
<dbReference type="GO" id="GO:0004185">
    <property type="term" value="F:serine-type carboxypeptidase activity"/>
    <property type="evidence" value="ECO:0007669"/>
    <property type="project" value="InterPro"/>
</dbReference>
<dbReference type="GO" id="GO:0006508">
    <property type="term" value="P:proteolysis"/>
    <property type="evidence" value="ECO:0007669"/>
    <property type="project" value="UniProtKB-KW"/>
</dbReference>
<dbReference type="FunFam" id="3.40.50.1820:FF:000096">
    <property type="entry name" value="Carboxypeptidase vitellogenic-like"/>
    <property type="match status" value="1"/>
</dbReference>
<dbReference type="Gene3D" id="3.40.50.1820">
    <property type="entry name" value="alpha/beta hydrolase"/>
    <property type="match status" value="1"/>
</dbReference>
<dbReference type="InterPro" id="IPR029058">
    <property type="entry name" value="AB_hydrolase_fold"/>
</dbReference>
<dbReference type="InterPro" id="IPR001563">
    <property type="entry name" value="Peptidase_S10"/>
</dbReference>
<dbReference type="InterPro" id="IPR033124">
    <property type="entry name" value="Ser_caboxypep_his_AS"/>
</dbReference>
<dbReference type="InterPro" id="IPR018202">
    <property type="entry name" value="Ser_caboxypep_ser_AS"/>
</dbReference>
<dbReference type="PANTHER" id="PTHR11802:SF472">
    <property type="entry name" value="SERINE CARBOXYPEPTIDASE CPVL-RELATED"/>
    <property type="match status" value="1"/>
</dbReference>
<dbReference type="PANTHER" id="PTHR11802">
    <property type="entry name" value="SERINE PROTEASE FAMILY S10 SERINE CARBOXYPEPTIDASE"/>
    <property type="match status" value="1"/>
</dbReference>
<dbReference type="Pfam" id="PF00450">
    <property type="entry name" value="Peptidase_S10"/>
    <property type="match status" value="1"/>
</dbReference>
<dbReference type="PRINTS" id="PR00724">
    <property type="entry name" value="CRBOXYPTASEC"/>
</dbReference>
<dbReference type="SUPFAM" id="SSF53474">
    <property type="entry name" value="alpha/beta-Hydrolases"/>
    <property type="match status" value="1"/>
</dbReference>
<dbReference type="PROSITE" id="PS00560">
    <property type="entry name" value="CARBOXYPEPT_SER_HIS"/>
    <property type="match status" value="1"/>
</dbReference>
<dbReference type="PROSITE" id="PS00131">
    <property type="entry name" value="CARBOXYPEPT_SER_SER"/>
    <property type="match status" value="1"/>
</dbReference>
<keyword id="KW-0121">Carboxypeptidase</keyword>
<keyword id="KW-0903">Direct protein sequencing</keyword>
<keyword id="KW-0325">Glycoprotein</keyword>
<keyword id="KW-0378">Hydrolase</keyword>
<keyword id="KW-0645">Protease</keyword>
<keyword id="KW-1185">Reference proteome</keyword>
<keyword id="KW-0964">Secreted</keyword>
<keyword id="KW-0732">Signal</keyword>
<reference key="1">
    <citation type="journal article" date="1991" name="Proc. Natl. Acad. Sci. U.S.A.">
        <title>An extraovarian protein accumulated in mosquito oocytes is a carboxypeptidase activated in embryos.</title>
        <authorList>
            <person name="Cho W.-L."/>
            <person name="Deitsch K.W."/>
            <person name="Raikhel A.S."/>
        </authorList>
    </citation>
    <scope>NUCLEOTIDE SEQUENCE [MRNA]</scope>
    <scope>PROTEIN SEQUENCE OF 20-36</scope>
    <scope>FUNCTION</scope>
    <scope>SUBCELLULAR LOCATION</scope>
    <scope>TISSUE SPECIFICITY</scope>
    <scope>DEVELOPMENTAL STAGE</scope>
    <scope>INDUCTION</scope>
    <source>
        <tissue>Fat body</tissue>
    </source>
</reference>
<reference key="2">
    <citation type="journal article" date="1993" name="Insect Mol. Biol.">
        <title>Cloning and analysis of the locus for mosquito vitellogenic carboxypeptidase.</title>
        <authorList>
            <person name="Deitsch K.W."/>
            <person name="Raikhel A.S."/>
        </authorList>
    </citation>
    <scope>NUCLEOTIDE SEQUENCE [GENOMIC DNA]</scope>
    <source>
        <strain>ugals</strain>
    </source>
</reference>
<reference key="3">
    <citation type="journal article" date="2007" name="Science">
        <title>Genome sequence of Aedes aegypti, a major arbovirus vector.</title>
        <authorList>
            <person name="Nene V."/>
            <person name="Wortman J.R."/>
            <person name="Lawson D."/>
            <person name="Haas B.J."/>
            <person name="Kodira C.D."/>
            <person name="Tu Z.J."/>
            <person name="Loftus B.J."/>
            <person name="Xi Z."/>
            <person name="Megy K."/>
            <person name="Grabherr M."/>
            <person name="Ren Q."/>
            <person name="Zdobnov E.M."/>
            <person name="Lobo N.F."/>
            <person name="Campbell K.S."/>
            <person name="Brown S.E."/>
            <person name="Bonaldo M.F."/>
            <person name="Zhu J."/>
            <person name="Sinkins S.P."/>
            <person name="Hogenkamp D.G."/>
            <person name="Amedeo P."/>
            <person name="Arensburger P."/>
            <person name="Atkinson P.W."/>
            <person name="Bidwell S.L."/>
            <person name="Biedler J."/>
            <person name="Birney E."/>
            <person name="Bruggner R.V."/>
            <person name="Costas J."/>
            <person name="Coy M.R."/>
            <person name="Crabtree J."/>
            <person name="Crawford M."/>
            <person name="DeBruyn B."/>
            <person name="DeCaprio D."/>
            <person name="Eiglmeier K."/>
            <person name="Eisenstadt E."/>
            <person name="El-Dorry H."/>
            <person name="Gelbart W.M."/>
            <person name="Gomes S.L."/>
            <person name="Hammond M."/>
            <person name="Hannick L.I."/>
            <person name="Hogan J.R."/>
            <person name="Holmes M.H."/>
            <person name="Jaffe D."/>
            <person name="Johnston S.J."/>
            <person name="Kennedy R.C."/>
            <person name="Koo H."/>
            <person name="Kravitz S."/>
            <person name="Kriventseva E.V."/>
            <person name="Kulp D."/>
            <person name="Labutti K."/>
            <person name="Lee E."/>
            <person name="Li S."/>
            <person name="Lovin D.D."/>
            <person name="Mao C."/>
            <person name="Mauceli E."/>
            <person name="Menck C.F."/>
            <person name="Miller J.R."/>
            <person name="Montgomery P."/>
            <person name="Mori A."/>
            <person name="Nascimento A.L."/>
            <person name="Naveira H.F."/>
            <person name="Nusbaum C."/>
            <person name="O'Leary S.B."/>
            <person name="Orvis J."/>
            <person name="Pertea M."/>
            <person name="Quesneville H."/>
            <person name="Reidenbach K.R."/>
            <person name="Rogers Y.-H.C."/>
            <person name="Roth C.W."/>
            <person name="Schneider J.R."/>
            <person name="Schatz M."/>
            <person name="Shumway M."/>
            <person name="Stanke M."/>
            <person name="Stinson E.O."/>
            <person name="Tubio J.M.C."/>
            <person name="Vanzee J.P."/>
            <person name="Verjovski-Almeida S."/>
            <person name="Werner D."/>
            <person name="White O.R."/>
            <person name="Wyder S."/>
            <person name="Zeng Q."/>
            <person name="Zhao Q."/>
            <person name="Zhao Y."/>
            <person name="Hill C.A."/>
            <person name="Raikhel A.S."/>
            <person name="Soares M.B."/>
            <person name="Knudson D.L."/>
            <person name="Lee N.H."/>
            <person name="Galagan J."/>
            <person name="Salzberg S.L."/>
            <person name="Paulsen I.T."/>
            <person name="Dimopoulos G."/>
            <person name="Collins F.H."/>
            <person name="Bruce B."/>
            <person name="Fraser-Liggett C.M."/>
            <person name="Severson D.W."/>
        </authorList>
    </citation>
    <scope>NUCLEOTIDE SEQUENCE [LARGE SCALE GENOMIC DNA]</scope>
    <source>
        <strain>LVPib12</strain>
    </source>
</reference>
<protein>
    <recommendedName>
        <fullName>Vitellogenic carboxypeptidase</fullName>
        <ecNumber>3.4.16.-</ecNumber>
    </recommendedName>
</protein>
<sequence length="471" mass="53766">MVKFHLLVLIAFTCYTCSDATLWNPYKKLMRGSASPRRPGESGEPLFLTPLLQDGKIEEARNKARVNHPMLSSVESYSGFMTVDAKHNSNLFFWYVPAKNNREQAPILVWLQGGPGASSLFGMFEENGPFHIHRNKSVKQREYSWHQNHHMIYIDNPVGTGFSFTDSDEGYSTNEEHVGENLMKFIQQFFVLFPNLLKHPFYISGESYGGKFVPAFGYAIHNSQSQPKINLQGLAIGDGYTDPLNQLNYGEYLYELGLIDLNGRKKFDEDTAAAIACAERKDMKCANRLIQGLFDGLDGQESYFKKVTGFSSYYNFIKGDEESKQDSVLMEFLSNPEVRKGIHVGELPFHDSDGHNKVAEMLSEDTLDTVAPWVSKLLSHYRVLFYNGQLDIICAYPMTVDFLMKMPFDGDSEYKRANREIYRVDGEIAGYKKRAGRLQEVLIRNAGHMVPRDQPKWAFDMITSFTHKNYL</sequence>
<comment type="function">
    <text evidence="2">May play a role in activating hydrolytic enzymes that are involved in the degradation of yolk proteins in developing embryos or may function as an exopeptidase in the degradation of vitellogenin.</text>
</comment>
<comment type="subcellular location">
    <subcellularLocation>
        <location evidence="2">Secreted</location>
    </subcellularLocation>
</comment>
<comment type="tissue specificity">
    <text evidence="2">Synthesized in the fat body of vitellogenic females, secreted into the hemolymph and accumulates in yolk bodies of developing oocytes.</text>
</comment>
<comment type="developmental stage">
    <text evidence="2">Maximally present at the middle of embryonic development and disappears by the end.</text>
</comment>
<comment type="induction">
    <text evidence="2">By 20-hydroxyecdysone.</text>
</comment>
<comment type="similarity">
    <text evidence="3">Belongs to the peptidase S10 family.</text>
</comment>
<comment type="sequence caution" evidence="3">
    <conflict type="frameshift">
        <sequence resource="EMBL-CDS" id="AAA17682"/>
    </conflict>
    <text>Lacks the last active site residue.</text>
</comment>
<feature type="signal peptide" evidence="2">
    <location>
        <begin position="1"/>
        <end position="19"/>
    </location>
</feature>
<feature type="chain" id="PRO_0000004336" description="Vitellogenic carboxypeptidase">
    <location>
        <begin position="20"/>
        <end position="471"/>
    </location>
</feature>
<feature type="active site" evidence="1">
    <location>
        <position position="207"/>
    </location>
</feature>
<feature type="active site" evidence="1">
    <location>
        <position position="391"/>
    </location>
</feature>
<feature type="active site" evidence="1">
    <location>
        <position position="448"/>
    </location>
</feature>
<feature type="glycosylation site" description="N-linked (GlcNAc...) asparagine" evidence="3">
    <location>
        <position position="135"/>
    </location>
</feature>
<feature type="sequence conflict" description="In Ref. 2; AAC41580." evidence="3" ref="2">
    <original>R</original>
    <variation>P</variation>
    <location>
        <position position="37"/>
    </location>
</feature>
<feature type="sequence conflict" description="In Ref. 1; AAA17682." evidence="3" ref="1">
    <original>K</original>
    <variation>N</variation>
    <location>
        <position position="136"/>
    </location>
</feature>
<feature type="sequence conflict" description="In Ref. 2; AAC41580." evidence="3" ref="2">
    <original>KC</original>
    <variation>NS</variation>
    <location>
        <begin position="284"/>
        <end position="285"/>
    </location>
</feature>
<gene>
    <name type="primary">VCP</name>
    <name type="ORF">AAEL006563</name>
</gene>
<organism>
    <name type="scientific">Aedes aegypti</name>
    <name type="common">Yellowfever mosquito</name>
    <name type="synonym">Culex aegypti</name>
    <dbReference type="NCBI Taxonomy" id="7159"/>
    <lineage>
        <taxon>Eukaryota</taxon>
        <taxon>Metazoa</taxon>
        <taxon>Ecdysozoa</taxon>
        <taxon>Arthropoda</taxon>
        <taxon>Hexapoda</taxon>
        <taxon>Insecta</taxon>
        <taxon>Pterygota</taxon>
        <taxon>Neoptera</taxon>
        <taxon>Endopterygota</taxon>
        <taxon>Diptera</taxon>
        <taxon>Nematocera</taxon>
        <taxon>Culicoidea</taxon>
        <taxon>Culicidae</taxon>
        <taxon>Culicinae</taxon>
        <taxon>Aedini</taxon>
        <taxon>Aedes</taxon>
        <taxon>Stegomyia</taxon>
    </lineage>
</organism>
<evidence type="ECO:0000250" key="1"/>
<evidence type="ECO:0000269" key="2">
    <source>
    </source>
</evidence>
<evidence type="ECO:0000305" key="3"/>
<proteinExistence type="evidence at protein level"/>
<name>VCP_AEDAE</name>
<accession>P42660</accession>
<accession>Q175U2</accession>